<evidence type="ECO:0000250" key="1"/>
<evidence type="ECO:0000256" key="2">
    <source>
        <dbReference type="SAM" id="MobiDB-lite"/>
    </source>
</evidence>
<evidence type="ECO:0000305" key="3"/>
<dbReference type="EMBL" id="EU516327">
    <property type="protein sequence ID" value="ACA96507.1"/>
    <property type="molecule type" value="mRNA"/>
</dbReference>
<dbReference type="SMR" id="C0ITL3"/>
<dbReference type="Allergome" id="11898">
    <property type="allergen name" value="Pac c 3.0101"/>
</dbReference>
<dbReference type="Allergome" id="7641">
    <property type="allergen name" value="Pac c 3"/>
</dbReference>
<dbReference type="GO" id="GO:0005576">
    <property type="term" value="C:extracellular region"/>
    <property type="evidence" value="ECO:0007669"/>
    <property type="project" value="UniProtKB-SubCell"/>
</dbReference>
<dbReference type="CDD" id="cd05380">
    <property type="entry name" value="CAP_euk"/>
    <property type="match status" value="1"/>
</dbReference>
<dbReference type="Gene3D" id="3.40.33.10">
    <property type="entry name" value="CAP"/>
    <property type="match status" value="1"/>
</dbReference>
<dbReference type="InterPro" id="IPR018244">
    <property type="entry name" value="Allrgn_V5/Tpx1_CS"/>
</dbReference>
<dbReference type="InterPro" id="IPR014044">
    <property type="entry name" value="CAP_dom"/>
</dbReference>
<dbReference type="InterPro" id="IPR035940">
    <property type="entry name" value="CAP_sf"/>
</dbReference>
<dbReference type="InterPro" id="IPR001283">
    <property type="entry name" value="CRISP-related"/>
</dbReference>
<dbReference type="InterPro" id="IPR002413">
    <property type="entry name" value="V5_allergen-like"/>
</dbReference>
<dbReference type="PANTHER" id="PTHR10334">
    <property type="entry name" value="CYSTEINE-RICH SECRETORY PROTEIN-RELATED"/>
    <property type="match status" value="1"/>
</dbReference>
<dbReference type="Pfam" id="PF00188">
    <property type="entry name" value="CAP"/>
    <property type="match status" value="1"/>
</dbReference>
<dbReference type="PRINTS" id="PR00838">
    <property type="entry name" value="V5ALLERGEN"/>
</dbReference>
<dbReference type="PRINTS" id="PR00837">
    <property type="entry name" value="V5TPXLIKE"/>
</dbReference>
<dbReference type="SMART" id="SM00198">
    <property type="entry name" value="SCP"/>
    <property type="match status" value="1"/>
</dbReference>
<dbReference type="SUPFAM" id="SSF55797">
    <property type="entry name" value="PR-1-like"/>
    <property type="match status" value="1"/>
</dbReference>
<dbReference type="PROSITE" id="PS01009">
    <property type="entry name" value="CRISP_1"/>
    <property type="match status" value="1"/>
</dbReference>
<dbReference type="PROSITE" id="PS01010">
    <property type="entry name" value="CRISP_2"/>
    <property type="match status" value="1"/>
</dbReference>
<proteinExistence type="evidence at transcript level"/>
<comment type="subcellular location">
    <subcellularLocation>
        <location evidence="1">Secreted</location>
    </subcellularLocation>
</comment>
<comment type="tissue specificity">
    <text>Expressed by the venom gland.</text>
</comment>
<comment type="allergen">
    <text evidence="1">Causes an allergic reaction in human.</text>
</comment>
<comment type="similarity">
    <text evidence="3">Belongs to the CRISP family. Venom allergen 5-like subfamily.</text>
</comment>
<feature type="chain" id="PRO_0000401927" description="Venom allergen 5">
    <location>
        <begin position="1" status="less than"/>
        <end position="199"/>
    </location>
</feature>
<feature type="domain" description="SCP">
    <location>
        <begin position="38"/>
        <end position="186"/>
    </location>
</feature>
<feature type="region of interest" description="Disordered" evidence="2">
    <location>
        <begin position="47"/>
        <end position="67"/>
    </location>
</feature>
<feature type="disulfide bond" evidence="1">
    <location>
        <begin position="21"/>
        <end position="87"/>
    </location>
</feature>
<feature type="disulfide bond" evidence="1">
    <location>
        <begin position="167"/>
        <end position="184"/>
    </location>
</feature>
<feature type="non-terminal residue">
    <location>
        <position position="1"/>
    </location>
</feature>
<sequence>TEGGAVHTMCQYTSPQPSPNCGTYSNAHITAADKETILKVHNDERQKVKAGQETRGNPGPQPAASNMPDLTWDNELAAIAQRWVNQCKIGHDGCRNVERYQVGQNIAMSGSTAKGPCNMNNLVQMWINEVNALNAADVSSMPSDGNYFMKIGHYTQLVWGKTTKVGCGIIQFLDGKFYKCYLACNYGPAGNMFGAPIYQ</sequence>
<accession>C0ITL3</accession>
<keyword id="KW-0020">Allergen</keyword>
<keyword id="KW-1015">Disulfide bond</keyword>
<keyword id="KW-0964">Secreted</keyword>
<protein>
    <recommendedName>
        <fullName>Venom allergen 5</fullName>
    </recommendedName>
    <alternativeName>
        <fullName>Antigen 5</fullName>
    </alternativeName>
    <alternativeName>
        <fullName>Cysteine-rich venom protein</fullName>
        <shortName>CRVP</shortName>
    </alternativeName>
    <allergenName>Pac c 3</allergenName>
</protein>
<reference key="1">
    <citation type="submission" date="2008-02" db="EMBL/GenBank/DDBJ databases">
        <title>cDNA sequence encoding a putative Pac c 3 allergen.</title>
        <authorList>
            <person name="Jeong K.Y."/>
            <person name="Kang D.B."/>
            <person name="Lee E.K."/>
            <person name="Park J.W."/>
        </authorList>
    </citation>
    <scope>NUCLEOTIDE SEQUENCE [MRNA]</scope>
    <source>
        <tissue>Venom gland</tissue>
    </source>
</reference>
<organism>
    <name type="scientific">Brachyponera chinensis</name>
    <name type="common">Asian needle ant</name>
    <name type="synonym">Pachycondyla chinensis</name>
    <dbReference type="NCBI Taxonomy" id="2340912"/>
    <lineage>
        <taxon>Eukaryota</taxon>
        <taxon>Metazoa</taxon>
        <taxon>Ecdysozoa</taxon>
        <taxon>Arthropoda</taxon>
        <taxon>Hexapoda</taxon>
        <taxon>Insecta</taxon>
        <taxon>Pterygota</taxon>
        <taxon>Neoptera</taxon>
        <taxon>Endopterygota</taxon>
        <taxon>Hymenoptera</taxon>
        <taxon>Apocrita</taxon>
        <taxon>Aculeata</taxon>
        <taxon>Formicoidea</taxon>
        <taxon>Formicidae</taxon>
        <taxon>Ponerinae</taxon>
        <taxon>Ponerini</taxon>
        <taxon>Brachyponera</taxon>
    </lineage>
</organism>
<name>VA5_BRACH</name>